<protein>
    <recommendedName>
        <fullName>Probable iron export ATP-binding protein FetA</fullName>
        <ecNumber>7.2.2.-</ecNumber>
    </recommendedName>
</protein>
<reference key="1">
    <citation type="submission" date="1997-01" db="EMBL/GenBank/DDBJ databases">
        <title>Sequence of minutes 4-25 of Escherichia coli.</title>
        <authorList>
            <person name="Chung E."/>
            <person name="Allen E."/>
            <person name="Araujo R."/>
            <person name="Aparicio A.M."/>
            <person name="Davis K."/>
            <person name="Duncan M."/>
            <person name="Federspiel N."/>
            <person name="Hyman R."/>
            <person name="Kalman S."/>
            <person name="Komp C."/>
            <person name="Kurdi O."/>
            <person name="Lew H."/>
            <person name="Lin D."/>
            <person name="Namath A."/>
            <person name="Oefner P."/>
            <person name="Roberts D."/>
            <person name="Schramm S."/>
            <person name="Davis R.W."/>
        </authorList>
    </citation>
    <scope>NUCLEOTIDE SEQUENCE [LARGE SCALE GENOMIC DNA]</scope>
    <source>
        <strain>K12 / MG1655 / ATCC 47076</strain>
    </source>
</reference>
<reference key="2">
    <citation type="journal article" date="1997" name="Science">
        <title>The complete genome sequence of Escherichia coli K-12.</title>
        <authorList>
            <person name="Blattner F.R."/>
            <person name="Plunkett G. III"/>
            <person name="Bloch C.A."/>
            <person name="Perna N.T."/>
            <person name="Burland V."/>
            <person name="Riley M."/>
            <person name="Collado-Vides J."/>
            <person name="Glasner J.D."/>
            <person name="Rode C.K."/>
            <person name="Mayhew G.F."/>
            <person name="Gregor J."/>
            <person name="Davis N.W."/>
            <person name="Kirkpatrick H.A."/>
            <person name="Goeden M.A."/>
            <person name="Rose D.J."/>
            <person name="Mau B."/>
            <person name="Shao Y."/>
        </authorList>
    </citation>
    <scope>NUCLEOTIDE SEQUENCE [LARGE SCALE GENOMIC DNA]</scope>
    <source>
        <strain>K12 / MG1655 / ATCC 47076</strain>
    </source>
</reference>
<reference key="3">
    <citation type="journal article" date="2006" name="Mol. Syst. Biol.">
        <title>Highly accurate genome sequences of Escherichia coli K-12 strains MG1655 and W3110.</title>
        <authorList>
            <person name="Hayashi K."/>
            <person name="Morooka N."/>
            <person name="Yamamoto Y."/>
            <person name="Fujita K."/>
            <person name="Isono K."/>
            <person name="Choi S."/>
            <person name="Ohtsubo E."/>
            <person name="Baba T."/>
            <person name="Wanner B.L."/>
            <person name="Mori H."/>
            <person name="Horiuchi T."/>
        </authorList>
    </citation>
    <scope>NUCLEOTIDE SEQUENCE [LARGE SCALE GENOMIC DNA]</scope>
    <source>
        <strain>K12 / W3110 / ATCC 27325 / DSM 5911</strain>
    </source>
</reference>
<reference key="4">
    <citation type="journal article" date="2013" name="Appl. Environ. Microbiol.">
        <title>Overexpression of fetA (ybbL) and fetB (ybbM), encoding an iron exporter, enhances resistance to oxidative stress in Escherichia coli.</title>
        <authorList>
            <person name="Nicolaou S.A."/>
            <person name="Fast A.G."/>
            <person name="Nakamaru-Ogiso E."/>
            <person name="Papoutsakis E.T."/>
        </authorList>
    </citation>
    <scope>FUNCTION</scope>
    <scope>SUBUNIT</scope>
    <scope>DISRUPTION PHENOTYPE</scope>
    <scope>GENE NAME</scope>
    <source>
        <strain>K12 / MG1655 / ATCC 47076</strain>
    </source>
</reference>
<gene>
    <name type="primary">fetA</name>
    <name type="synonym">ybbL</name>
    <name type="ordered locus">b0490</name>
    <name type="ordered locus">JW0479</name>
</gene>
<sequence length="225" mass="25382">MQENSPLLQLQNVGYLAGDAKILNNINFSLRAGEFKLITGPSGCGKSTLLKIVASLISPTSGTLLFEGEDVSTLKPEIYRQQVSYCAQTPTLFGDTVYDNLIFPWQIRNRQPDPAIFLDFLERFALPDSILTKNIAELSGGEKQRISLIRNLQFMPKVLLLDEITSALDESNKHNVNEMIHRYVREQNIAVLWVTHDKDEINHADKVITLQPHAGEMQEARYELA</sequence>
<accession>P77279</accession>
<accession>Q2MBT7</accession>
<comment type="function">
    <text evidence="3">Part of the ABC transporter complex FetAB, which is probably involved in iron export and enhances resistance to H(2)O(2)-mediated oxidative stress. Probably responsible for energy coupling to the transport system.</text>
</comment>
<comment type="subunit">
    <text evidence="1">The complex is composed of two ATP-binding proteins (FetA) and two transmembrane proteins (FetB).</text>
</comment>
<comment type="interaction">
    <interactant intactId="EBI-560090">
        <id>P77279</id>
    </interactant>
    <interactant intactId="EBI-543750">
        <id>P0A6F5</id>
        <label>groEL</label>
    </interactant>
    <organismsDiffer>false</organismsDiffer>
    <experiments>3</experiments>
</comment>
<comment type="subcellular location">
    <subcellularLocation>
        <location evidence="1">Cell inner membrane</location>
        <topology evidence="1">Peripheral membrane protein</topology>
    </subcellularLocation>
</comment>
<comment type="disruption phenotype">
    <text evidence="3">Mutant exhibits increased sensitivity to H(2)O(2) stress.</text>
</comment>
<comment type="similarity">
    <text evidence="4">Belongs to the ABC transporter superfamily.</text>
</comment>
<proteinExistence type="evidence at protein level"/>
<dbReference type="EC" id="7.2.2.-"/>
<dbReference type="EMBL" id="U82664">
    <property type="protein sequence ID" value="AAB40244.1"/>
    <property type="molecule type" value="Genomic_DNA"/>
</dbReference>
<dbReference type="EMBL" id="U00096">
    <property type="protein sequence ID" value="AAC73592.1"/>
    <property type="molecule type" value="Genomic_DNA"/>
</dbReference>
<dbReference type="EMBL" id="AP009048">
    <property type="protein sequence ID" value="BAE76269.1"/>
    <property type="molecule type" value="Genomic_DNA"/>
</dbReference>
<dbReference type="PIR" id="A64780">
    <property type="entry name" value="A64780"/>
</dbReference>
<dbReference type="RefSeq" id="NP_415023.1">
    <property type="nucleotide sequence ID" value="NC_000913.3"/>
</dbReference>
<dbReference type="RefSeq" id="WP_001157540.1">
    <property type="nucleotide sequence ID" value="NZ_SSZK01000009.1"/>
</dbReference>
<dbReference type="SMR" id="P77279"/>
<dbReference type="BioGRID" id="4259847">
    <property type="interactions" value="156"/>
</dbReference>
<dbReference type="BioGRID" id="851329">
    <property type="interactions" value="2"/>
</dbReference>
<dbReference type="DIP" id="DIP-11320N"/>
<dbReference type="FunCoup" id="P77279">
    <property type="interactions" value="40"/>
</dbReference>
<dbReference type="IntAct" id="P77279">
    <property type="interactions" value="6"/>
</dbReference>
<dbReference type="STRING" id="511145.b0490"/>
<dbReference type="TCDB" id="3.A.1.139.2">
    <property type="family name" value="the atp-binding cassette (abc) superfamily"/>
</dbReference>
<dbReference type="jPOST" id="P77279"/>
<dbReference type="PaxDb" id="511145-b0490"/>
<dbReference type="EnsemblBacteria" id="AAC73592">
    <property type="protein sequence ID" value="AAC73592"/>
    <property type="gene ID" value="b0490"/>
</dbReference>
<dbReference type="GeneID" id="93776959"/>
<dbReference type="GeneID" id="946990"/>
<dbReference type="KEGG" id="ecj:JW0479"/>
<dbReference type="KEGG" id="eco:b0490"/>
<dbReference type="KEGG" id="ecoc:C3026_02410"/>
<dbReference type="PATRIC" id="fig|511145.12.peg.511"/>
<dbReference type="EchoBASE" id="EB3047"/>
<dbReference type="eggNOG" id="COG4619">
    <property type="taxonomic scope" value="Bacteria"/>
</dbReference>
<dbReference type="HOGENOM" id="CLU_000604_1_22_6"/>
<dbReference type="InParanoid" id="P77279"/>
<dbReference type="OMA" id="PWQIRNK"/>
<dbReference type="OrthoDB" id="4408248at2"/>
<dbReference type="PhylomeDB" id="P77279"/>
<dbReference type="BioCyc" id="EcoCyc:YBBL-MONOMER"/>
<dbReference type="PRO" id="PR:P77279"/>
<dbReference type="Proteomes" id="UP000000625">
    <property type="component" value="Chromosome"/>
</dbReference>
<dbReference type="GO" id="GO:0005886">
    <property type="term" value="C:plasma membrane"/>
    <property type="evidence" value="ECO:0000314"/>
    <property type="project" value="EcoCyc"/>
</dbReference>
<dbReference type="GO" id="GO:0005524">
    <property type="term" value="F:ATP binding"/>
    <property type="evidence" value="ECO:0007669"/>
    <property type="project" value="UniProtKB-KW"/>
</dbReference>
<dbReference type="GO" id="GO:0016887">
    <property type="term" value="F:ATP hydrolysis activity"/>
    <property type="evidence" value="ECO:0007669"/>
    <property type="project" value="InterPro"/>
</dbReference>
<dbReference type="GO" id="GO:0006879">
    <property type="term" value="P:intracellular iron ion homeostasis"/>
    <property type="evidence" value="ECO:0000315"/>
    <property type="project" value="EcoCyc"/>
</dbReference>
<dbReference type="GO" id="GO:0006826">
    <property type="term" value="P:iron ion transport"/>
    <property type="evidence" value="ECO:0007669"/>
    <property type="project" value="UniProtKB-KW"/>
</dbReference>
<dbReference type="FunFam" id="3.40.50.300:FF:000782">
    <property type="entry name" value="Putative ABC transporter ATP-binding component"/>
    <property type="match status" value="1"/>
</dbReference>
<dbReference type="Gene3D" id="3.40.50.300">
    <property type="entry name" value="P-loop containing nucleotide triphosphate hydrolases"/>
    <property type="match status" value="1"/>
</dbReference>
<dbReference type="InterPro" id="IPR003593">
    <property type="entry name" value="AAA+_ATPase"/>
</dbReference>
<dbReference type="InterPro" id="IPR003439">
    <property type="entry name" value="ABC_transporter-like_ATP-bd"/>
</dbReference>
<dbReference type="InterPro" id="IPR017871">
    <property type="entry name" value="ABC_transporter-like_CS"/>
</dbReference>
<dbReference type="InterPro" id="IPR027417">
    <property type="entry name" value="P-loop_NTPase"/>
</dbReference>
<dbReference type="NCBIfam" id="NF007601">
    <property type="entry name" value="PRK10247.1"/>
    <property type="match status" value="1"/>
</dbReference>
<dbReference type="PANTHER" id="PTHR43423">
    <property type="entry name" value="ABC TRANSPORTER I FAMILY MEMBER 17"/>
    <property type="match status" value="1"/>
</dbReference>
<dbReference type="PANTHER" id="PTHR43423:SF12">
    <property type="entry name" value="IRON EXPORT ATP-BINDING PROTEIN FETA-RELATED"/>
    <property type="match status" value="1"/>
</dbReference>
<dbReference type="Pfam" id="PF00005">
    <property type="entry name" value="ABC_tran"/>
    <property type="match status" value="1"/>
</dbReference>
<dbReference type="SMART" id="SM00382">
    <property type="entry name" value="AAA"/>
    <property type="match status" value="1"/>
</dbReference>
<dbReference type="SUPFAM" id="SSF52540">
    <property type="entry name" value="P-loop containing nucleoside triphosphate hydrolases"/>
    <property type="match status" value="1"/>
</dbReference>
<dbReference type="PROSITE" id="PS00211">
    <property type="entry name" value="ABC_TRANSPORTER_1"/>
    <property type="match status" value="1"/>
</dbReference>
<dbReference type="PROSITE" id="PS50893">
    <property type="entry name" value="ABC_TRANSPORTER_2"/>
    <property type="match status" value="1"/>
</dbReference>
<keyword id="KW-0067">ATP-binding</keyword>
<keyword id="KW-0997">Cell inner membrane</keyword>
<keyword id="KW-1003">Cell membrane</keyword>
<keyword id="KW-0406">Ion transport</keyword>
<keyword id="KW-0408">Iron</keyword>
<keyword id="KW-0410">Iron transport</keyword>
<keyword id="KW-0472">Membrane</keyword>
<keyword id="KW-0547">Nucleotide-binding</keyword>
<keyword id="KW-1185">Reference proteome</keyword>
<keyword id="KW-1278">Translocase</keyword>
<keyword id="KW-0813">Transport</keyword>
<feature type="chain" id="PRO_0000093155" description="Probable iron export ATP-binding protein FetA">
    <location>
        <begin position="1"/>
        <end position="225"/>
    </location>
</feature>
<feature type="domain" description="ABC transporter" evidence="2">
    <location>
        <begin position="8"/>
        <end position="225"/>
    </location>
</feature>
<feature type="binding site" evidence="2">
    <location>
        <begin position="40"/>
        <end position="47"/>
    </location>
    <ligand>
        <name>ATP</name>
        <dbReference type="ChEBI" id="CHEBI:30616"/>
    </ligand>
</feature>
<name>FETA_ECOLI</name>
<organism>
    <name type="scientific">Escherichia coli (strain K12)</name>
    <dbReference type="NCBI Taxonomy" id="83333"/>
    <lineage>
        <taxon>Bacteria</taxon>
        <taxon>Pseudomonadati</taxon>
        <taxon>Pseudomonadota</taxon>
        <taxon>Gammaproteobacteria</taxon>
        <taxon>Enterobacterales</taxon>
        <taxon>Enterobacteriaceae</taxon>
        <taxon>Escherichia</taxon>
    </lineage>
</organism>
<evidence type="ECO:0000250" key="1"/>
<evidence type="ECO:0000255" key="2">
    <source>
        <dbReference type="PROSITE-ProRule" id="PRU00434"/>
    </source>
</evidence>
<evidence type="ECO:0000269" key="3">
    <source>
    </source>
</evidence>
<evidence type="ECO:0000305" key="4"/>